<reference key="1">
    <citation type="journal article" date="2009" name="PLoS ONE">
        <title>Complete genome sequence of Francisella tularensis subspecies holarctica FTNF002-00.</title>
        <authorList>
            <person name="Barabote R.D."/>
            <person name="Xie G."/>
            <person name="Brettin T.S."/>
            <person name="Hinrichs S.H."/>
            <person name="Fey P.D."/>
            <person name="Jay J.J."/>
            <person name="Engle J.L."/>
            <person name="Godbole S.D."/>
            <person name="Noronha J.M."/>
            <person name="Scheuermann R.H."/>
            <person name="Zhou L.W."/>
            <person name="Lion C."/>
            <person name="Dempsey M.P."/>
        </authorList>
    </citation>
    <scope>NUCLEOTIDE SEQUENCE [LARGE SCALE GENOMIC DNA]</scope>
    <source>
        <strain>FTNF002-00 / FTA</strain>
    </source>
</reference>
<gene>
    <name evidence="1" type="primary">dtd</name>
    <name type="ordered locus">FTA_0057</name>
</gene>
<accession>A7N982</accession>
<proteinExistence type="inferred from homology"/>
<protein>
    <recommendedName>
        <fullName evidence="1">D-aminoacyl-tRNA deacylase</fullName>
        <shortName evidence="1">DTD</shortName>
        <ecNumber evidence="1">3.1.1.96</ecNumber>
    </recommendedName>
    <alternativeName>
        <fullName evidence="1">Gly-tRNA(Ala) deacylase</fullName>
    </alternativeName>
</protein>
<organism>
    <name type="scientific">Francisella tularensis subsp. holarctica (strain FTNF002-00 / FTA)</name>
    <dbReference type="NCBI Taxonomy" id="458234"/>
    <lineage>
        <taxon>Bacteria</taxon>
        <taxon>Pseudomonadati</taxon>
        <taxon>Pseudomonadota</taxon>
        <taxon>Gammaproteobacteria</taxon>
        <taxon>Thiotrichales</taxon>
        <taxon>Francisellaceae</taxon>
        <taxon>Francisella</taxon>
    </lineage>
</organism>
<name>DTD_FRATF</name>
<keyword id="KW-0963">Cytoplasm</keyword>
<keyword id="KW-0378">Hydrolase</keyword>
<keyword id="KW-0694">RNA-binding</keyword>
<keyword id="KW-0820">tRNA-binding</keyword>
<evidence type="ECO:0000255" key="1">
    <source>
        <dbReference type="HAMAP-Rule" id="MF_00518"/>
    </source>
</evidence>
<feature type="chain" id="PRO_1000127535" description="D-aminoacyl-tRNA deacylase">
    <location>
        <begin position="1"/>
        <end position="145"/>
    </location>
</feature>
<feature type="short sequence motif" description="Gly-cisPro motif, important for rejection of L-amino acids" evidence="1">
    <location>
        <begin position="137"/>
        <end position="138"/>
    </location>
</feature>
<sequence>MLSIIQRVNCAKVVVDNQKVADINKGILALVCVEKEDTQQNFEKMADKIIKYRIFEDDAGKMNLSLVDIDAEIILVPQFTLAADTKKGNRPSFSSGCPPEIAKEKFKEFENIFRRKYNKVQTGIFGADMKVFLTNDGPVTFSFKI</sequence>
<dbReference type="EC" id="3.1.1.96" evidence="1"/>
<dbReference type="EMBL" id="CP000803">
    <property type="protein sequence ID" value="ABU60535.1"/>
    <property type="molecule type" value="Genomic_DNA"/>
</dbReference>
<dbReference type="RefSeq" id="WP_010030652.1">
    <property type="nucleotide sequence ID" value="NC_009749.1"/>
</dbReference>
<dbReference type="SMR" id="A7N982"/>
<dbReference type="KEGG" id="fta:FTA_0057"/>
<dbReference type="HOGENOM" id="CLU_076901_1_0_6"/>
<dbReference type="GO" id="GO:0005737">
    <property type="term" value="C:cytoplasm"/>
    <property type="evidence" value="ECO:0007669"/>
    <property type="project" value="UniProtKB-SubCell"/>
</dbReference>
<dbReference type="GO" id="GO:0051500">
    <property type="term" value="F:D-tyrosyl-tRNA(Tyr) deacylase activity"/>
    <property type="evidence" value="ECO:0007669"/>
    <property type="project" value="TreeGrafter"/>
</dbReference>
<dbReference type="GO" id="GO:0106026">
    <property type="term" value="F:Gly-tRNA(Ala) deacylase activity"/>
    <property type="evidence" value="ECO:0007669"/>
    <property type="project" value="UniProtKB-UniRule"/>
</dbReference>
<dbReference type="GO" id="GO:0043908">
    <property type="term" value="F:Ser(Gly)-tRNA(Ala) hydrolase activity"/>
    <property type="evidence" value="ECO:0007669"/>
    <property type="project" value="UniProtKB-UniRule"/>
</dbReference>
<dbReference type="GO" id="GO:0000049">
    <property type="term" value="F:tRNA binding"/>
    <property type="evidence" value="ECO:0007669"/>
    <property type="project" value="UniProtKB-UniRule"/>
</dbReference>
<dbReference type="GO" id="GO:0019478">
    <property type="term" value="P:D-amino acid catabolic process"/>
    <property type="evidence" value="ECO:0007669"/>
    <property type="project" value="UniProtKB-UniRule"/>
</dbReference>
<dbReference type="FunFam" id="3.50.80.10:FF:000001">
    <property type="entry name" value="D-aminoacyl-tRNA deacylase"/>
    <property type="match status" value="1"/>
</dbReference>
<dbReference type="Gene3D" id="3.50.80.10">
    <property type="entry name" value="D-tyrosyl-tRNA(Tyr) deacylase"/>
    <property type="match status" value="1"/>
</dbReference>
<dbReference type="HAMAP" id="MF_00518">
    <property type="entry name" value="Deacylase_Dtd"/>
    <property type="match status" value="1"/>
</dbReference>
<dbReference type="InterPro" id="IPR003732">
    <property type="entry name" value="Daa-tRNA_deacyls_DTD"/>
</dbReference>
<dbReference type="InterPro" id="IPR023509">
    <property type="entry name" value="DTD-like_sf"/>
</dbReference>
<dbReference type="NCBIfam" id="TIGR00256">
    <property type="entry name" value="D-aminoacyl-tRNA deacylase"/>
    <property type="match status" value="1"/>
</dbReference>
<dbReference type="PANTHER" id="PTHR10472:SF5">
    <property type="entry name" value="D-AMINOACYL-TRNA DEACYLASE 1"/>
    <property type="match status" value="1"/>
</dbReference>
<dbReference type="PANTHER" id="PTHR10472">
    <property type="entry name" value="D-TYROSYL-TRNA TYR DEACYLASE"/>
    <property type="match status" value="1"/>
</dbReference>
<dbReference type="Pfam" id="PF02580">
    <property type="entry name" value="Tyr_Deacylase"/>
    <property type="match status" value="1"/>
</dbReference>
<dbReference type="SUPFAM" id="SSF69500">
    <property type="entry name" value="DTD-like"/>
    <property type="match status" value="1"/>
</dbReference>
<comment type="function">
    <text evidence="1">An aminoacyl-tRNA editing enzyme that deacylates mischarged D-aminoacyl-tRNAs. Also deacylates mischarged glycyl-tRNA(Ala), protecting cells against glycine mischarging by AlaRS. Acts via tRNA-based rather than protein-based catalysis; rejects L-amino acids rather than detecting D-amino acids in the active site. By recycling D-aminoacyl-tRNA to D-amino acids and free tRNA molecules, this enzyme counteracts the toxicity associated with the formation of D-aminoacyl-tRNA entities in vivo and helps enforce protein L-homochirality.</text>
</comment>
<comment type="catalytic activity">
    <reaction evidence="1">
        <text>glycyl-tRNA(Ala) + H2O = tRNA(Ala) + glycine + H(+)</text>
        <dbReference type="Rhea" id="RHEA:53744"/>
        <dbReference type="Rhea" id="RHEA-COMP:9657"/>
        <dbReference type="Rhea" id="RHEA-COMP:13640"/>
        <dbReference type="ChEBI" id="CHEBI:15377"/>
        <dbReference type="ChEBI" id="CHEBI:15378"/>
        <dbReference type="ChEBI" id="CHEBI:57305"/>
        <dbReference type="ChEBI" id="CHEBI:78442"/>
        <dbReference type="ChEBI" id="CHEBI:78522"/>
        <dbReference type="EC" id="3.1.1.96"/>
    </reaction>
</comment>
<comment type="catalytic activity">
    <reaction evidence="1">
        <text>a D-aminoacyl-tRNA + H2O = a tRNA + a D-alpha-amino acid + H(+)</text>
        <dbReference type="Rhea" id="RHEA:13953"/>
        <dbReference type="Rhea" id="RHEA-COMP:10123"/>
        <dbReference type="Rhea" id="RHEA-COMP:10124"/>
        <dbReference type="ChEBI" id="CHEBI:15377"/>
        <dbReference type="ChEBI" id="CHEBI:15378"/>
        <dbReference type="ChEBI" id="CHEBI:59871"/>
        <dbReference type="ChEBI" id="CHEBI:78442"/>
        <dbReference type="ChEBI" id="CHEBI:79333"/>
        <dbReference type="EC" id="3.1.1.96"/>
    </reaction>
</comment>
<comment type="subunit">
    <text evidence="1">Homodimer.</text>
</comment>
<comment type="subcellular location">
    <subcellularLocation>
        <location evidence="1">Cytoplasm</location>
    </subcellularLocation>
</comment>
<comment type="domain">
    <text evidence="1">A Gly-cisPro motif from one monomer fits into the active site of the other monomer to allow specific chiral rejection of L-amino acids.</text>
</comment>
<comment type="similarity">
    <text evidence="1">Belongs to the DTD family.</text>
</comment>